<feature type="chain" id="PRO_0000117778" description="NADH-ubiquinone oxidoreductase chain 3">
    <location>
        <begin position="1"/>
        <end position="116"/>
    </location>
</feature>
<feature type="transmembrane region" description="Helical" evidence="2">
    <location>
        <begin position="3"/>
        <end position="23"/>
    </location>
</feature>
<feature type="transmembrane region" description="Helical" evidence="2">
    <location>
        <begin position="56"/>
        <end position="76"/>
    </location>
</feature>
<feature type="transmembrane region" description="Helical" evidence="2">
    <location>
        <begin position="85"/>
        <end position="105"/>
    </location>
</feature>
<feature type="sequence variant" description="In subspecies Rhodorus.">
    <original>V</original>
    <variation>I</variation>
    <location>
        <position position="90"/>
    </location>
</feature>
<organism>
    <name type="scientific">Oncorhynchus masou</name>
    <name type="common">Cherry salmon</name>
    <name type="synonym">Masu salmon</name>
    <dbReference type="NCBI Taxonomy" id="8020"/>
    <lineage>
        <taxon>Eukaryota</taxon>
        <taxon>Metazoa</taxon>
        <taxon>Chordata</taxon>
        <taxon>Craniata</taxon>
        <taxon>Vertebrata</taxon>
        <taxon>Euteleostomi</taxon>
        <taxon>Actinopterygii</taxon>
        <taxon>Neopterygii</taxon>
        <taxon>Teleostei</taxon>
        <taxon>Protacanthopterygii</taxon>
        <taxon>Salmoniformes</taxon>
        <taxon>Salmonidae</taxon>
        <taxon>Salmoninae</taxon>
        <taxon>Oncorhynchus</taxon>
    </lineage>
</organism>
<geneLocation type="mitochondrion"/>
<name>NU3M_ONCMA</name>
<sequence length="116" mass="12864">MNLITTIITITITLSAVLATISFWLPQISPDAEKLSPYECGFDPLGSARLPFSLRFFLIAILFLLFDLEIALLLPLPWGDQLNTPALTLVWSTAVLALLTLGLIYEWTQGGLEWAE</sequence>
<accession>Q37108</accession>
<accession>Q35270</accession>
<gene>
    <name type="primary">MT-ND3</name>
    <name type="synonym">MTND3</name>
    <name type="synonym">NADH3</name>
    <name type="synonym">ND3</name>
</gene>
<reference key="1">
    <citation type="submission" date="1996-07" db="EMBL/GenBank/DDBJ databases">
        <authorList>
            <person name="McKay S.J."/>
            <person name="Devlin R.H."/>
            <person name="Smith M.J."/>
        </authorList>
    </citation>
    <scope>NUCLEOTIDE SEQUENCE [GENOMIC DNA]</scope>
    <source>
        <tissue>Liver</tissue>
    </source>
</reference>
<reference key="2">
    <citation type="journal article" date="1996" name="Zool. Sci.">
        <title>Genetic relationship among three subspecies of Oncorhynchus masou determined by mitochondrial DNA sequence analysis.</title>
        <authorList>
            <person name="Oohara I."/>
            <person name="Okazaki T."/>
        </authorList>
    </citation>
    <scope>NUCLEOTIDE SEQUENCE [GENOMIC DNA]</scope>
</reference>
<proteinExistence type="inferred from homology"/>
<evidence type="ECO:0000250" key="1"/>
<evidence type="ECO:0000255" key="2"/>
<evidence type="ECO:0000305" key="3"/>
<dbReference type="EC" id="7.1.1.2"/>
<dbReference type="EMBL" id="U28363">
    <property type="protein sequence ID" value="AAB05094.1"/>
    <property type="molecule type" value="Genomic_DNA"/>
</dbReference>
<dbReference type="EMBL" id="U28364">
    <property type="protein sequence ID" value="AAB05092.1"/>
    <property type="molecule type" value="Genomic_DNA"/>
</dbReference>
<dbReference type="EMBL" id="D63410">
    <property type="protein sequence ID" value="BAA09712.1"/>
    <property type="molecule type" value="Genomic_DNA"/>
</dbReference>
<dbReference type="EMBL" id="D63335">
    <property type="protein sequence ID" value="BAA09650.1"/>
    <property type="molecule type" value="Genomic_DNA"/>
</dbReference>
<dbReference type="EMBL" id="D63336">
    <property type="protein sequence ID" value="BAA09654.1"/>
    <property type="molecule type" value="Genomic_DNA"/>
</dbReference>
<dbReference type="SMR" id="Q37108"/>
<dbReference type="GO" id="GO:0031966">
    <property type="term" value="C:mitochondrial membrane"/>
    <property type="evidence" value="ECO:0007669"/>
    <property type="project" value="UniProtKB-SubCell"/>
</dbReference>
<dbReference type="GO" id="GO:0030964">
    <property type="term" value="C:NADH dehydrogenase complex"/>
    <property type="evidence" value="ECO:0007669"/>
    <property type="project" value="TreeGrafter"/>
</dbReference>
<dbReference type="GO" id="GO:0008137">
    <property type="term" value="F:NADH dehydrogenase (ubiquinone) activity"/>
    <property type="evidence" value="ECO:0007669"/>
    <property type="project" value="UniProtKB-EC"/>
</dbReference>
<dbReference type="FunFam" id="1.20.58.1610:FF:000004">
    <property type="entry name" value="NADH-quinone oxidoreductase subunit A"/>
    <property type="match status" value="1"/>
</dbReference>
<dbReference type="Gene3D" id="1.20.58.1610">
    <property type="entry name" value="NADH:ubiquinone/plastoquinone oxidoreductase, chain 3"/>
    <property type="match status" value="1"/>
</dbReference>
<dbReference type="InterPro" id="IPR000440">
    <property type="entry name" value="NADH_UbQ/plastoQ_OxRdtase_su3"/>
</dbReference>
<dbReference type="InterPro" id="IPR038430">
    <property type="entry name" value="NDAH_ubi_oxred_su3_sf"/>
</dbReference>
<dbReference type="PANTHER" id="PTHR11058">
    <property type="entry name" value="NADH-UBIQUINONE OXIDOREDUCTASE CHAIN 3"/>
    <property type="match status" value="1"/>
</dbReference>
<dbReference type="PANTHER" id="PTHR11058:SF9">
    <property type="entry name" value="NADH-UBIQUINONE OXIDOREDUCTASE CHAIN 3"/>
    <property type="match status" value="1"/>
</dbReference>
<dbReference type="Pfam" id="PF00507">
    <property type="entry name" value="Oxidored_q4"/>
    <property type="match status" value="1"/>
</dbReference>
<protein>
    <recommendedName>
        <fullName>NADH-ubiquinone oxidoreductase chain 3</fullName>
        <ecNumber>7.1.1.2</ecNumber>
    </recommendedName>
    <alternativeName>
        <fullName>NADH dehydrogenase subunit 3</fullName>
    </alternativeName>
</protein>
<comment type="function">
    <text evidence="1">Core subunit of the mitochondrial membrane respiratory chain NADH dehydrogenase (Complex I) that is believed to belong to the minimal assembly required for catalysis. Complex I functions in the transfer of electrons from NADH to the respiratory chain. The immediate electron acceptor for the enzyme is believed to be ubiquinone (By similarity).</text>
</comment>
<comment type="catalytic activity">
    <reaction>
        <text>a ubiquinone + NADH + 5 H(+)(in) = a ubiquinol + NAD(+) + 4 H(+)(out)</text>
        <dbReference type="Rhea" id="RHEA:29091"/>
        <dbReference type="Rhea" id="RHEA-COMP:9565"/>
        <dbReference type="Rhea" id="RHEA-COMP:9566"/>
        <dbReference type="ChEBI" id="CHEBI:15378"/>
        <dbReference type="ChEBI" id="CHEBI:16389"/>
        <dbReference type="ChEBI" id="CHEBI:17976"/>
        <dbReference type="ChEBI" id="CHEBI:57540"/>
        <dbReference type="ChEBI" id="CHEBI:57945"/>
        <dbReference type="EC" id="7.1.1.2"/>
    </reaction>
</comment>
<comment type="subcellular location">
    <subcellularLocation>
        <location evidence="1">Mitochondrion membrane</location>
        <topology evidence="1">Multi-pass membrane protein</topology>
    </subcellularLocation>
</comment>
<comment type="similarity">
    <text evidence="3">Belongs to the complex I subunit 3 family.</text>
</comment>
<keyword id="KW-0249">Electron transport</keyword>
<keyword id="KW-0472">Membrane</keyword>
<keyword id="KW-0496">Mitochondrion</keyword>
<keyword id="KW-0520">NAD</keyword>
<keyword id="KW-0679">Respiratory chain</keyword>
<keyword id="KW-1278">Translocase</keyword>
<keyword id="KW-0812">Transmembrane</keyword>
<keyword id="KW-1133">Transmembrane helix</keyword>
<keyword id="KW-0813">Transport</keyword>
<keyword id="KW-0830">Ubiquinone</keyword>